<organism>
    <name type="scientific">Ricinus communis</name>
    <name type="common">Castor bean</name>
    <dbReference type="NCBI Taxonomy" id="3988"/>
    <lineage>
        <taxon>Eukaryota</taxon>
        <taxon>Viridiplantae</taxon>
        <taxon>Streptophyta</taxon>
        <taxon>Embryophyta</taxon>
        <taxon>Tracheophyta</taxon>
        <taxon>Spermatophyta</taxon>
        <taxon>Magnoliopsida</taxon>
        <taxon>eudicotyledons</taxon>
        <taxon>Gunneridae</taxon>
        <taxon>Pentapetalae</taxon>
        <taxon>rosids</taxon>
        <taxon>fabids</taxon>
        <taxon>Malpighiales</taxon>
        <taxon>Euphorbiaceae</taxon>
        <taxon>Acalyphoideae</taxon>
        <taxon>Acalypheae</taxon>
        <taxon>Ricinus</taxon>
    </lineage>
</organism>
<sequence>MAKLIPTIALVSVLLFIIANASFAYRTTITTIEIDESKGEREGSSSQQCRQEVQRKDLSSCERYLRQSSSRRSPGEEVLRMPGDENQQQESQQLQQCCNQVKQVRDECQCEAIKYIAEDQIQQGQLHGEESERVAQRAGEIVSSCGVRCMRQTRTNPSQQGCRGQIQEQQNLRQCQEYIKQQVSGQGPRRSDNQERSLRGCCDHLKQMQSQCRCEGLRQAIEQQQSQGQLQGQDVFEAFRTAANLPSMCGVSPTECRF</sequence>
<comment type="function">
    <text>2S seed storage proteins.</text>
</comment>
<comment type="subunit">
    <text evidence="4">The 2 mature proteins consist of heterodimers of a small and a large chain; disulfide-linked.</text>
</comment>
<comment type="developmental stage">
    <text evidence="5">Expressed in ripening seeds during testa formation and desiccation.</text>
</comment>
<comment type="PTM">
    <text>The N-terminus of both large chains is blocked.</text>
</comment>
<comment type="PTM">
    <text>The C-terminus of the allergen Ric c 1 and allergen Ric c 3 small chains are heterogeneous and the length of the chains can vary from 33 to 36 amino acids and from 36 to 40 amino acids respectively.</text>
</comment>
<comment type="allergen">
    <text>Causes an allergic reaction in human.</text>
</comment>
<comment type="biotechnology">
    <text>Ric C 3 constitutes the peptidic component of the immunomodulator Inmunoferon.</text>
</comment>
<comment type="miscellaneous">
    <text>The allergen Ric c 1 small chain acts as a calmodulin (CaM) antagonist that inhibits CaM-dependent myosin light chain kinase with IC(50)= 0.25 uM.</text>
</comment>
<comment type="similarity">
    <text evidence="9">Belongs to the 2S seed storage albumins family.</text>
</comment>
<accession>P01089</accession>
<accession>Q9S872</accession>
<accession>Q9S873</accession>
<accession>Q9S874</accession>
<name>2SS_RICCO</name>
<keyword id="KW-0002">3D-structure</keyword>
<keyword id="KW-0020">Allergen</keyword>
<keyword id="KW-0165">Cleavage on pair of basic residues</keyword>
<keyword id="KW-0903">Direct protein sequencing</keyword>
<keyword id="KW-1015">Disulfide bond</keyword>
<keyword id="KW-0597">Phosphoprotein</keyword>
<keyword id="KW-0873">Pyrrolidone carboxylic acid</keyword>
<keyword id="KW-0708">Seed storage protein</keyword>
<keyword id="KW-0732">Signal</keyword>
<keyword id="KW-0758">Storage protein</keyword>
<proteinExistence type="evidence at protein level"/>
<evidence type="ECO:0000250" key="1"/>
<evidence type="ECO:0000255" key="2"/>
<evidence type="ECO:0000256" key="3">
    <source>
        <dbReference type="SAM" id="MobiDB-lite"/>
    </source>
</evidence>
<evidence type="ECO:0000269" key="4">
    <source>
    </source>
</evidence>
<evidence type="ECO:0000269" key="5">
    <source>
    </source>
</evidence>
<evidence type="ECO:0000269" key="6">
    <source>
    </source>
</evidence>
<evidence type="ECO:0000269" key="7">
    <source>
    </source>
</evidence>
<evidence type="ECO:0000269" key="8">
    <source>
    </source>
</evidence>
<evidence type="ECO:0000305" key="9"/>
<evidence type="ECO:0007829" key="10">
    <source>
        <dbReference type="PDB" id="1PSY"/>
    </source>
</evidence>
<dbReference type="EMBL" id="X54158">
    <property type="protein sequence ID" value="CAA38097.1"/>
    <property type="molecule type" value="Genomic_DNA"/>
</dbReference>
<dbReference type="PIR" id="S11499">
    <property type="entry name" value="RZCS"/>
</dbReference>
<dbReference type="RefSeq" id="XP_002522854.1">
    <property type="nucleotide sequence ID" value="XM_002522808.2"/>
</dbReference>
<dbReference type="RefSeq" id="XP_002522855.1">
    <property type="nucleotide sequence ID" value="XM_002522809.1"/>
</dbReference>
<dbReference type="PDB" id="1PSY">
    <property type="method" value="NMR"/>
    <property type="chains" value="A=33-156"/>
</dbReference>
<dbReference type="PDBsum" id="1PSY"/>
<dbReference type="SMR" id="P01089"/>
<dbReference type="Allergome" id="3467">
    <property type="allergen name" value="Ric c 1.0101"/>
</dbReference>
<dbReference type="Allergome" id="614">
    <property type="allergen name" value="Ric c 1"/>
</dbReference>
<dbReference type="iPTMnet" id="P01089"/>
<dbReference type="GeneID" id="8280732"/>
<dbReference type="GeneID" id="8280733"/>
<dbReference type="KEGG" id="rcu:8280732"/>
<dbReference type="KEGG" id="rcu:8280733"/>
<dbReference type="eggNOG" id="ENOG502S7EV">
    <property type="taxonomic scope" value="Eukaryota"/>
</dbReference>
<dbReference type="OrthoDB" id="1922883at2759"/>
<dbReference type="EvolutionaryTrace" id="P01089"/>
<dbReference type="GO" id="GO:0045735">
    <property type="term" value="F:nutrient reservoir activity"/>
    <property type="evidence" value="ECO:0007669"/>
    <property type="project" value="UniProtKB-KW"/>
</dbReference>
<dbReference type="CDD" id="cd00261">
    <property type="entry name" value="AAI_SS"/>
    <property type="match status" value="2"/>
</dbReference>
<dbReference type="Gene3D" id="1.10.110.10">
    <property type="entry name" value="Plant lipid-transfer and hydrophobic proteins"/>
    <property type="match status" value="2"/>
</dbReference>
<dbReference type="InterPro" id="IPR036312">
    <property type="entry name" value="Bifun_inhib/LTP/seed_sf"/>
</dbReference>
<dbReference type="InterPro" id="IPR016140">
    <property type="entry name" value="Bifunc_inhib/LTP/seed_store"/>
</dbReference>
<dbReference type="InterPro" id="IPR000617">
    <property type="entry name" value="Napin/2SS/CON"/>
</dbReference>
<dbReference type="PANTHER" id="PTHR35496">
    <property type="entry name" value="2S SEED STORAGE PROTEIN 1-RELATED"/>
    <property type="match status" value="1"/>
</dbReference>
<dbReference type="PANTHER" id="PTHR35496:SF18">
    <property type="entry name" value="BIFUNCTIONAL INHIBITOR_PLANT LIPID TRANSFER PROTEIN_SEED STORAGE HELICAL DOMAIN-CONTAINING PROTEIN"/>
    <property type="match status" value="1"/>
</dbReference>
<dbReference type="Pfam" id="PF00234">
    <property type="entry name" value="Tryp_alpha_amyl"/>
    <property type="match status" value="2"/>
</dbReference>
<dbReference type="PRINTS" id="PR00496">
    <property type="entry name" value="NAPIN"/>
</dbReference>
<dbReference type="SMART" id="SM00499">
    <property type="entry name" value="AAI"/>
    <property type="match status" value="2"/>
</dbReference>
<dbReference type="SUPFAM" id="SSF47699">
    <property type="entry name" value="Bifunctional inhibitor/lipid-transfer protein/seed storage 2S albumin"/>
    <property type="match status" value="2"/>
</dbReference>
<protein>
    <recommendedName>
        <fullName evidence="9">2S seed storage albumin protein</fullName>
    </recommendedName>
    <alternativeName>
        <fullName>2S albumin</fullName>
    </alternativeName>
    <allergenName>Ric c 1/3</allergenName>
    <component>
        <recommendedName>
            <fullName>Allergen Ric c 3 small chain</fullName>
        </recommendedName>
        <alternativeName>
            <fullName>4.7 kDa napin-like protein small chain</fullName>
        </alternativeName>
        <alternativeName>
            <fullName>CB-1A small chain</fullName>
        </alternativeName>
        <alternativeName>
            <fullName>RS1A</fullName>
        </alternativeName>
    </component>
    <component>
        <recommendedName>
            <fullName>Allergen Ric c 3 large chain</fullName>
        </recommendedName>
        <alternativeName>
            <fullName>CB-1A large chain</fullName>
        </alternativeName>
        <alternativeName>
            <fullName>RL1</fullName>
        </alternativeName>
    </component>
    <component>
        <recommendedName>
            <fullName>Allergen Ric c 1 small chain</fullName>
        </recommendedName>
        <alternativeName>
            <fullName>2S albumin small chain</fullName>
        </alternativeName>
        <alternativeName>
            <fullName>4 kDa napin-like protein small chain</fullName>
        </alternativeName>
        <alternativeName>
            <fullName>RS2B</fullName>
        </alternativeName>
    </component>
    <component>
        <recommendedName>
            <fullName>Allergen Ric c 1 large chain</fullName>
        </recommendedName>
        <alternativeName>
            <fullName>2S albumin large chain</fullName>
        </alternativeName>
        <alternativeName>
            <fullName>7.3 kDa napin-like protein large chain</fullName>
        </alternativeName>
        <alternativeName>
            <fullName>RL2</fullName>
        </alternativeName>
    </component>
</protein>
<feature type="signal peptide" evidence="2">
    <location>
        <begin position="1"/>
        <end position="24"/>
    </location>
</feature>
<feature type="propeptide" id="PRO_0000032162">
    <location>
        <begin position="25"/>
        <end position="35"/>
    </location>
</feature>
<feature type="chain" id="PRO_0000041857" description="Allergen Ric c 3 small chain">
    <location>
        <begin position="36"/>
        <end position="76"/>
    </location>
</feature>
<feature type="propeptide" id="PRO_0000041858" evidence="8">
    <location>
        <begin position="77"/>
        <end position="86"/>
    </location>
</feature>
<feature type="chain" id="PRO_0000041859" description="Allergen Ric c 3 large chain">
    <location>
        <begin position="87"/>
        <end position="153"/>
    </location>
</feature>
<feature type="propeptide" id="PRO_0000041860">
    <location>
        <begin position="154"/>
        <end position="156"/>
    </location>
</feature>
<feature type="chain" id="PRO_0000032163" description="Allergen Ric c 1 small chain">
    <location>
        <begin position="157"/>
        <end position="190"/>
    </location>
</feature>
<feature type="propeptide" id="PRO_0000032164">
    <location>
        <begin position="191"/>
        <end position="193"/>
    </location>
</feature>
<feature type="chain" id="PRO_0000032165" description="Allergen Ric c 1 large chain">
    <location>
        <begin position="194"/>
        <end position="258"/>
    </location>
</feature>
<feature type="region of interest" description="Disordered" evidence="3">
    <location>
        <begin position="64"/>
        <end position="87"/>
    </location>
</feature>
<feature type="compositionally biased region" description="Basic and acidic residues" evidence="3">
    <location>
        <begin position="73"/>
        <end position="83"/>
    </location>
</feature>
<feature type="modified residue" description="Phosphoserine" evidence="7">
    <location>
        <position position="69"/>
    </location>
</feature>
<feature type="modified residue" description="Pyrrolidone carboxylic acid" evidence="8">
    <location>
        <position position="87"/>
    </location>
</feature>
<feature type="modified residue" description="Pyrrolidone carboxylic acid" evidence="6 8">
    <location>
        <position position="194"/>
    </location>
</feature>
<feature type="disulfide bond" description="Interchain (between Ric c 3 small and Ric c 3 large chains)" evidence="4">
    <location>
        <begin position="49"/>
        <end position="108"/>
    </location>
</feature>
<feature type="disulfide bond" description="Interchain (between Ric c 3 small and Ric c 3 large chains)" evidence="4">
    <location>
        <begin position="61"/>
        <end position="97"/>
    </location>
</feature>
<feature type="disulfide bond" evidence="4">
    <location>
        <begin position="98"/>
        <end position="145"/>
    </location>
</feature>
<feature type="disulfide bond" evidence="4">
    <location>
        <begin position="110"/>
        <end position="149"/>
    </location>
</feature>
<feature type="disulfide bond" description="Interchain (between Ric c 1 small and Ric c 1 large chains)" evidence="1">
    <location>
        <begin position="162"/>
        <end position="212"/>
    </location>
</feature>
<feature type="disulfide bond" description="Interchain (between Ric c 1 small and Ric c 1 large chains)" evidence="1">
    <location>
        <begin position="175"/>
        <end position="201"/>
    </location>
</feature>
<feature type="disulfide bond" evidence="1">
    <location>
        <begin position="202"/>
        <end position="249"/>
    </location>
</feature>
<feature type="disulfide bond" evidence="1">
    <location>
        <begin position="214"/>
        <end position="256"/>
    </location>
</feature>
<feature type="sequence variant" evidence="5">
    <original>P</original>
    <variation>T</variation>
    <location>
        <position position="74"/>
    </location>
</feature>
<feature type="sequence conflict" description="In Ref. 4; AA sequence." evidence="9" ref="4">
    <original>Q</original>
    <variation>E</variation>
    <location>
        <position position="194"/>
    </location>
</feature>
<feature type="sequence conflict" description="In Ref. 3; AA sequence." evidence="9" ref="3">
    <original>E</original>
    <variation>Q</variation>
    <location>
        <position position="222"/>
    </location>
</feature>
<feature type="sequence conflict" description="In Ref. 3; AA sequence." evidence="9" ref="3">
    <location>
        <begin position="226"/>
        <end position="229"/>
    </location>
</feature>
<feature type="sequence conflict" description="In Ref. 3; AA sequence." evidence="9" ref="3">
    <original>D</original>
    <variation>N</variation>
    <location>
        <position position="234"/>
    </location>
</feature>
<feature type="sequence conflict" description="In Ref. 3; AA sequence." evidence="9" ref="3">
    <original>E</original>
    <variation>Q</variation>
    <location>
        <position position="255"/>
    </location>
</feature>
<feature type="strand" evidence="10">
    <location>
        <begin position="44"/>
        <end position="48"/>
    </location>
</feature>
<feature type="helix" evidence="10">
    <location>
        <begin position="49"/>
        <end position="53"/>
    </location>
</feature>
<feature type="helix" evidence="10">
    <location>
        <begin position="61"/>
        <end position="66"/>
    </location>
</feature>
<feature type="strand" evidence="10">
    <location>
        <begin position="67"/>
        <end position="69"/>
    </location>
</feature>
<feature type="strand" evidence="10">
    <location>
        <begin position="84"/>
        <end position="86"/>
    </location>
</feature>
<feature type="strand" evidence="10">
    <location>
        <begin position="88"/>
        <end position="90"/>
    </location>
</feature>
<feature type="helix" evidence="10">
    <location>
        <begin position="92"/>
        <end position="101"/>
    </location>
</feature>
<feature type="helix" evidence="10">
    <location>
        <begin position="108"/>
        <end position="123"/>
    </location>
</feature>
<feature type="helix" evidence="10">
    <location>
        <begin position="132"/>
        <end position="145"/>
    </location>
</feature>
<feature type="turn" evidence="10">
    <location>
        <begin position="149"/>
        <end position="151"/>
    </location>
</feature>
<reference key="1">
    <citation type="journal article" date="1990" name="Mol. Gen. Genet.">
        <title>The Ricinus communis 2S albumin precursor: a single preproprotein may be processed into two different heterodimeric storage proteins.</title>
        <authorList>
            <person name="Irwin S.D."/>
            <person name="Keen J.N."/>
            <person name="Findlay J.B.C."/>
            <person name="Lord J.M."/>
        </authorList>
    </citation>
    <scope>NUCLEOTIDE SEQUENCE [GENOMIC DNA]</scope>
    <scope>PROTEOLYTIC PROCESSING OF PRECURSOR</scope>
    <scope>BLOCKAGE OF N-TERMINUS</scope>
    <scope>VARIANT THR-74</scope>
    <scope>DEVELOPMENTAL STAGE</scope>
    <source>
        <tissue>Endosperm</tissue>
    </source>
</reference>
<reference key="2">
    <citation type="journal article" date="1990" name="Nucleic Acids Res.">
        <title>Nucleotide sequence of a Ricinus communis 2S albumin precursor gene.</title>
        <authorList>
            <person name="Irwin S.D."/>
            <person name="Lord J.M."/>
        </authorList>
    </citation>
    <scope>NUCLEOTIDE SEQUENCE [GENOMIC DNA]</scope>
    <source>
        <tissue>Endosperm</tissue>
    </source>
</reference>
<reference key="3">
    <citation type="journal article" date="1982" name="J. Biol. Chem.">
        <title>Amino acid sequence of small and large subunits of seed storage protein from Ricinus communis.</title>
        <authorList>
            <person name="Sharief F.S."/>
            <person name="Li S.S.-L."/>
        </authorList>
    </citation>
    <scope>PROTEIN SEQUENCE OF 157-190 AND 194-258</scope>
    <scope>PYROGLUTAMATE FORMATION AT GLN-194</scope>
</reference>
<reference key="4">
    <citation type="journal article" date="1996" name="Biochim. Biophys. Acta">
        <title>Purification and sequencing of napin-like protein small and large chains from Momordica charantia and Ricinus communis seeds and determination of sites phosphorylated by plant Ca(2+)-dependent protein kinase.</title>
        <authorList>
            <person name="Neumann G.M."/>
            <person name="Condron R."/>
            <person name="Polya G.M."/>
        </authorList>
    </citation>
    <scope>PROTEIN SEQUENCE OF 36-76; 157-190 AND 194-258</scope>
    <scope>PHOSPHORYLATION AT SER-69</scope>
</reference>
<reference key="5">
    <citation type="journal article" date="1998" name="Int. Arch. Allergy Immunol.">
        <title>Ric c 1 and Ric c 3, the allergenic 2S albumin storage proteins of Ricinus communis: complete primary structures and phylogenetic relationships.</title>
        <authorList>
            <person name="Bashir M.E."/>
            <person name="Hubatsch I."/>
            <person name="Leinenbach H.P."/>
            <person name="Zeppezauer M."/>
            <person name="Panzani R.C."/>
            <person name="Hussein I.H."/>
        </authorList>
    </citation>
    <scope>PROTEIN SEQUENCE OF 36-72; 87-153; 157-190 AND 194-258</scope>
    <scope>PYROGLUTAMATE FORMATION AT GLN-87 AND GLN-194</scope>
    <scope>NOMENCLATURE</scope>
</reference>
<reference key="6">
    <citation type="journal article" date="1983" name="Biochem. J.">
        <title>Structural relationship between barley (Hordeum vulgare) trypsin inhibitor and castor-bean (Ricinus communis) storage protein.</title>
        <authorList>
            <person name="Odani S."/>
            <person name="Koide T."/>
            <person name="Ono T."/>
            <person name="Ohnishi K."/>
        </authorList>
    </citation>
    <scope>SIMILARITY TO PROTEINASE INHIBITORS</scope>
</reference>
<reference key="7">
    <citation type="journal article" date="2003" name="Biochemistry">
        <title>Solution structure of RicC3, a 2S albumin storage protein from Ricinus communis.</title>
        <authorList>
            <person name="Pantoja-Uceda D."/>
            <person name="Bruix M."/>
            <person name="Gimenez-Gallego G."/>
            <person name="Rico M."/>
            <person name="Santoro J."/>
        </authorList>
    </citation>
    <scope>STRUCTURE BY NMR OF 36-156</scope>
    <scope>DISULFIDE BONDS</scope>
</reference>